<accession>P72315</accession>
<protein>
    <recommendedName>
        <fullName>Uncharacterized protein in cooM 5'region</fullName>
    </recommendedName>
</protein>
<comment type="similarity">
    <text evidence="1">Belongs to the UbiD family.</text>
</comment>
<reference key="1">
    <citation type="journal article" date="1996" name="J. Bacteriol.">
        <title>Characterization of the region encoding the CO-induced hydrogenase of Rhodospirillum rubrum.</title>
        <authorList>
            <person name="Fox D.J."/>
            <person name="He Y."/>
            <person name="Shelver D."/>
            <person name="Roberts G.P."/>
            <person name="Ludden P.W."/>
        </authorList>
    </citation>
    <scope>NUCLEOTIDE SEQUENCE [GENOMIC DNA]</scope>
    <source>
        <strain>UR1</strain>
    </source>
</reference>
<organism>
    <name type="scientific">Rhodospirillum rubrum</name>
    <dbReference type="NCBI Taxonomy" id="1085"/>
    <lineage>
        <taxon>Bacteria</taxon>
        <taxon>Pseudomonadati</taxon>
        <taxon>Pseudomonadota</taxon>
        <taxon>Alphaproteobacteria</taxon>
        <taxon>Rhodospirillales</taxon>
        <taxon>Rhodospirillaceae</taxon>
        <taxon>Rhodospirillum</taxon>
    </lineage>
</organism>
<evidence type="ECO:0000305" key="1"/>
<feature type="chain" id="PRO_0000157376" description="Uncharacterized protein in cooM 5'region">
    <location>
        <begin position="1"/>
        <end position="463"/>
    </location>
</feature>
<name>YCOM_RHORU</name>
<sequence>MERDFSGSPRVIADLGRIIDRLEALGRLVRVRSEVDPRHDLAGIAARFEGGPQAVLFEKVAGHAYPVFVGLYWSRELLGALFDQPETALPQHVAASIKSWQSAPVDPLVVADGPVLEVTEAEVDLSTLPIPIHALEDGGPYFDAAVVIAKDPETGVRNASIQRFQVIGKDRLVINIDAGRHLGLYLDKAAARGEPLAFTLNVGVGPGVHFAAAAPAEAAPVETDELGIASAFHGAPLELVAGTVGPVEMVAHAMWALECEIRPGEVHAEGPFAEVTGYYARVEPRPLVRVKRIHRRRAPIFHTLLSGAEVFNSVGLLGEANVLALLRVQVPGVEDVYFSHGGCGFYHCVVKIAQKRAGWAKQAILATFAAFPPLKMVTVVDEDVDIRNGRDVEWAMTTRLDAKTGILVIENAFGHGLNPTFPNYLGTKVGFDCTRPFPHTPAFDRAKTKAMTLDGLDIVGAKR</sequence>
<dbReference type="EMBL" id="U65510">
    <property type="protein sequence ID" value="AAC45115.1"/>
    <property type="molecule type" value="Genomic_DNA"/>
</dbReference>
<dbReference type="PIR" id="T51313">
    <property type="entry name" value="T51313"/>
</dbReference>
<dbReference type="RefSeq" id="WP_011389173.1">
    <property type="nucleotide sequence ID" value="NZ_DAMDTZ010000025.1"/>
</dbReference>
<dbReference type="SMR" id="P72315"/>
<dbReference type="OMA" id="DPILPIC"/>
<dbReference type="GO" id="GO:0005737">
    <property type="term" value="C:cytoplasm"/>
    <property type="evidence" value="ECO:0007669"/>
    <property type="project" value="TreeGrafter"/>
</dbReference>
<dbReference type="GO" id="GO:0016831">
    <property type="term" value="F:carboxy-lyase activity"/>
    <property type="evidence" value="ECO:0007669"/>
    <property type="project" value="InterPro"/>
</dbReference>
<dbReference type="Gene3D" id="3.40.1670.10">
    <property type="entry name" value="UbiD C-terminal domain-like"/>
    <property type="match status" value="1"/>
</dbReference>
<dbReference type="InterPro" id="IPR002830">
    <property type="entry name" value="UbiD"/>
</dbReference>
<dbReference type="InterPro" id="IPR049381">
    <property type="entry name" value="UbiD-like_C"/>
</dbReference>
<dbReference type="InterPro" id="IPR049383">
    <property type="entry name" value="UbiD-like_N"/>
</dbReference>
<dbReference type="InterPro" id="IPR048304">
    <property type="entry name" value="UbiD_Rift_dom"/>
</dbReference>
<dbReference type="NCBIfam" id="TIGR00148">
    <property type="entry name" value="UbiD family decarboxylase"/>
    <property type="match status" value="1"/>
</dbReference>
<dbReference type="PANTHER" id="PTHR30108">
    <property type="entry name" value="3-OCTAPRENYL-4-HYDROXYBENZOATE CARBOXY-LYASE-RELATED"/>
    <property type="match status" value="1"/>
</dbReference>
<dbReference type="PANTHER" id="PTHR30108:SF21">
    <property type="entry name" value="4-HYDROXYBENZOATE DECARBOXYLASE"/>
    <property type="match status" value="1"/>
</dbReference>
<dbReference type="Pfam" id="PF01977">
    <property type="entry name" value="UbiD"/>
    <property type="match status" value="1"/>
</dbReference>
<dbReference type="Pfam" id="PF20696">
    <property type="entry name" value="UbiD_C"/>
    <property type="match status" value="1"/>
</dbReference>
<dbReference type="Pfam" id="PF20695">
    <property type="entry name" value="UbiD_N"/>
    <property type="match status" value="1"/>
</dbReference>
<dbReference type="SUPFAM" id="SSF50475">
    <property type="entry name" value="FMN-binding split barrel"/>
    <property type="match status" value="1"/>
</dbReference>
<dbReference type="SUPFAM" id="SSF143968">
    <property type="entry name" value="UbiD C-terminal domain-like"/>
    <property type="match status" value="1"/>
</dbReference>
<proteinExistence type="inferred from homology"/>